<comment type="function">
    <text evidence="1">The Vlp and Vsp proteins are antigenically distinct proteins, only one vlp or vsp gene is transcriptionally active at any one time. Switching between these genes is a mechanism of host immune response evasion.</text>
</comment>
<comment type="subcellular location">
    <subcellularLocation>
        <location evidence="1">Cell outer membrane</location>
        <topology>Lipid-anchor</topology>
    </subcellularLocation>
</comment>
<comment type="miscellaneous">
    <text evidence="6">Genes for both Vlp and Vsp families are on (usually) unnamed linear plasmids in B.hermsii HS1.</text>
</comment>
<comment type="similarity">
    <text evidence="5">Belongs to the variable large protein (Vlp) family. Delta subfamily.</text>
</comment>
<geneLocation type="plasmid" evidence="3"/>
<organism>
    <name type="scientific">Borrelia hermsii</name>
    <dbReference type="NCBI Taxonomy" id="140"/>
    <lineage>
        <taxon>Bacteria</taxon>
        <taxon>Pseudomonadati</taxon>
        <taxon>Spirochaetota</taxon>
        <taxon>Spirochaetia</taxon>
        <taxon>Spirochaetales</taxon>
        <taxon>Borreliaceae</taxon>
        <taxon>Borrelia</taxon>
    </lineage>
</organism>
<evidence type="ECO:0000250" key="1">
    <source>
        <dbReference type="UniProtKB" id="P21875"/>
    </source>
</evidence>
<evidence type="ECO:0000256" key="2">
    <source>
        <dbReference type="SAM" id="MobiDB-lite"/>
    </source>
</evidence>
<evidence type="ECO:0000303" key="3">
    <source>
    </source>
</evidence>
<evidence type="ECO:0000303" key="4">
    <source>
    </source>
</evidence>
<evidence type="ECO:0000305" key="5"/>
<evidence type="ECO:0000305" key="6">
    <source>
    </source>
</evidence>
<dbReference type="EMBL" id="L04788">
    <property type="protein sequence ID" value="AAA22963.1"/>
    <property type="molecule type" value="Genomic_DNA"/>
</dbReference>
<dbReference type="PIR" id="I40300">
    <property type="entry name" value="I40300"/>
</dbReference>
<dbReference type="RefSeq" id="WP_015633355.1">
    <property type="nucleotide sequence ID" value="NZ_CP161008.1"/>
</dbReference>
<dbReference type="SMR" id="P32777"/>
<dbReference type="GO" id="GO:0009279">
    <property type="term" value="C:cell outer membrane"/>
    <property type="evidence" value="ECO:0007669"/>
    <property type="project" value="UniProtKB-SubCell"/>
</dbReference>
<dbReference type="InterPro" id="IPR000680">
    <property type="entry name" value="Borrelia_lipo"/>
</dbReference>
<dbReference type="Pfam" id="PF00921">
    <property type="entry name" value="Lipoprotein_2"/>
    <property type="match status" value="1"/>
</dbReference>
<dbReference type="SUPFAM" id="SSF74748">
    <property type="entry name" value="Variable surface antigen VlsE"/>
    <property type="match status" value="1"/>
</dbReference>
<dbReference type="PROSITE" id="PS51257">
    <property type="entry name" value="PROKAR_LIPOPROTEIN"/>
    <property type="match status" value="1"/>
</dbReference>
<keyword id="KW-0998">Cell outer membrane</keyword>
<keyword id="KW-0449">Lipoprotein</keyword>
<keyword id="KW-0472">Membrane</keyword>
<keyword id="KW-0564">Palmitate</keyword>
<keyword id="KW-0614">Plasmid</keyword>
<keyword id="KW-0732">Signal</keyword>
<protein>
    <recommendedName>
        <fullName evidence="4">Variable large protein 17</fullName>
    </recommendedName>
    <alternativeName>
        <fullName>Variable major outer membrane lipoprotein 17</fullName>
    </alternativeName>
</protein>
<accession>P32777</accession>
<gene>
    <name evidence="4" type="primary">vlp17</name>
    <name evidence="3" type="synonym">vmp17</name>
</gene>
<feature type="signal peptide" evidence="5">
    <location>
        <begin position="1"/>
        <end position="18"/>
    </location>
</feature>
<feature type="chain" id="PRO_0000018088" description="Variable large protein 17">
    <location>
        <begin position="19"/>
        <end position="353"/>
    </location>
</feature>
<feature type="region of interest" description="Disordered" evidence="2">
    <location>
        <begin position="332"/>
        <end position="353"/>
    </location>
</feature>
<feature type="compositionally biased region" description="Polar residues" evidence="2">
    <location>
        <begin position="337"/>
        <end position="353"/>
    </location>
</feature>
<feature type="lipid moiety-binding region" description="N-palmitoyl cysteine" evidence="5">
    <location>
        <position position="19"/>
    </location>
</feature>
<feature type="lipid moiety-binding region" description="S-diacylglycerol cysteine" evidence="5">
    <location>
        <position position="19"/>
    </location>
</feature>
<name>VLP17_BORHE</name>
<reference key="1">
    <citation type="journal article" date="1992" name="Mol. Microbiol.">
        <title>Subtelomeric expression regions of Borrelia hermsii linear plasmids are highly polymorphic.</title>
        <authorList>
            <person name="Restrepo B.I."/>
            <person name="Kitten T."/>
            <person name="Carter C.J."/>
            <person name="Infante D."/>
            <person name="Barbour A.G."/>
        </authorList>
    </citation>
    <scope>NUCLEOTIDE SEQUENCE [GENOMIC DNA]</scope>
    <source>
        <strain>ATCC 35209 / HS1</strain>
    </source>
</reference>
<reference key="2">
    <citation type="journal article" date="1998" name="Infect. Immun.">
        <title>Population structure of the relapsing fever spirochete Borrelia hermsii as indicated by polymorphism of two multigene families that encode immunogenic outer surface lipoproteins.</title>
        <authorList>
            <person name="Hinnebusch B.J."/>
            <person name="Barbour A.G."/>
            <person name="Restrepo B.I."/>
            <person name="Schwan T.G."/>
        </authorList>
    </citation>
    <scope>NOMENCLATURE</scope>
</reference>
<proteinExistence type="inferred from homology"/>
<sequence>MRKRISAIIMTLFMVLVSCNSGGVAEDPKTVYLTSIANLGKGFLDVFVTFGDMVTGAFGIKADTKKSDIGKYFTDIESTMTSVKKKLQDEVAKNGNYPKVKTAVDEFVAILGKIEKGAKEASKGATGDVIIGNTVKNGDAVPGEATSVNSLVKGIKEIVGVVLKEGKADADATKDDSKKDIGKLFTATTDANRADNAAAQAAAASIGAVTGADILQAIVQSKENPVANSTDGIEKATDAAEIAVAPAKDNKKEIKDGAKKDAVIAAGIALRAMAKNGTFSIKNNEDAAVTTINSAAASAVNKILSTLIIAIRNTVDSGLKTINEALATVKQEDKSVEATNTAEATTSGQQAKN</sequence>